<accession>Q161I8</accession>
<reference key="1">
    <citation type="journal article" date="2007" name="J. Bacteriol.">
        <title>The complete genome sequence of Roseobacter denitrificans reveals a mixotrophic rather than photosynthetic metabolism.</title>
        <authorList>
            <person name="Swingley W.D."/>
            <person name="Sadekar S."/>
            <person name="Mastrian S.D."/>
            <person name="Matthies H.J."/>
            <person name="Hao J."/>
            <person name="Ramos H."/>
            <person name="Acharya C.R."/>
            <person name="Conrad A.L."/>
            <person name="Taylor H.L."/>
            <person name="Dejesa L.C."/>
            <person name="Shah M.K."/>
            <person name="O'Huallachain M.E."/>
            <person name="Lince M.T."/>
            <person name="Blankenship R.E."/>
            <person name="Beatty J.T."/>
            <person name="Touchman J.W."/>
        </authorList>
    </citation>
    <scope>NUCLEOTIDE SEQUENCE [LARGE SCALE GENOMIC DNA]</scope>
    <source>
        <strain>ATCC 33942 / OCh 114</strain>
    </source>
</reference>
<dbReference type="EC" id="4.2.1.20" evidence="1"/>
<dbReference type="EMBL" id="CP000362">
    <property type="protein sequence ID" value="ABG33355.1"/>
    <property type="molecule type" value="Genomic_DNA"/>
</dbReference>
<dbReference type="RefSeq" id="WP_011569966.1">
    <property type="nucleotide sequence ID" value="NC_008209.1"/>
</dbReference>
<dbReference type="SMR" id="Q161I8"/>
<dbReference type="STRING" id="375451.RD1_3895"/>
<dbReference type="KEGG" id="rde:RD1_3895"/>
<dbReference type="eggNOG" id="COG0159">
    <property type="taxonomic scope" value="Bacteria"/>
</dbReference>
<dbReference type="HOGENOM" id="CLU_016734_0_4_5"/>
<dbReference type="OrthoDB" id="9804578at2"/>
<dbReference type="UniPathway" id="UPA00035">
    <property type="reaction ID" value="UER00044"/>
</dbReference>
<dbReference type="Proteomes" id="UP000007029">
    <property type="component" value="Chromosome"/>
</dbReference>
<dbReference type="GO" id="GO:0005829">
    <property type="term" value="C:cytosol"/>
    <property type="evidence" value="ECO:0007669"/>
    <property type="project" value="TreeGrafter"/>
</dbReference>
<dbReference type="GO" id="GO:0004834">
    <property type="term" value="F:tryptophan synthase activity"/>
    <property type="evidence" value="ECO:0007669"/>
    <property type="project" value="UniProtKB-UniRule"/>
</dbReference>
<dbReference type="CDD" id="cd04724">
    <property type="entry name" value="Tryptophan_synthase_alpha"/>
    <property type="match status" value="1"/>
</dbReference>
<dbReference type="FunFam" id="3.20.20.70:FF:000037">
    <property type="entry name" value="Tryptophan synthase alpha chain"/>
    <property type="match status" value="1"/>
</dbReference>
<dbReference type="Gene3D" id="3.20.20.70">
    <property type="entry name" value="Aldolase class I"/>
    <property type="match status" value="1"/>
</dbReference>
<dbReference type="HAMAP" id="MF_00131">
    <property type="entry name" value="Trp_synth_alpha"/>
    <property type="match status" value="1"/>
</dbReference>
<dbReference type="InterPro" id="IPR013785">
    <property type="entry name" value="Aldolase_TIM"/>
</dbReference>
<dbReference type="InterPro" id="IPR011060">
    <property type="entry name" value="RibuloseP-bd_barrel"/>
</dbReference>
<dbReference type="InterPro" id="IPR018204">
    <property type="entry name" value="Trp_synthase_alpha_AS"/>
</dbReference>
<dbReference type="InterPro" id="IPR002028">
    <property type="entry name" value="Trp_synthase_suA"/>
</dbReference>
<dbReference type="NCBIfam" id="TIGR00262">
    <property type="entry name" value="trpA"/>
    <property type="match status" value="1"/>
</dbReference>
<dbReference type="PANTHER" id="PTHR43406:SF1">
    <property type="entry name" value="TRYPTOPHAN SYNTHASE ALPHA CHAIN, CHLOROPLASTIC"/>
    <property type="match status" value="1"/>
</dbReference>
<dbReference type="PANTHER" id="PTHR43406">
    <property type="entry name" value="TRYPTOPHAN SYNTHASE, ALPHA CHAIN"/>
    <property type="match status" value="1"/>
</dbReference>
<dbReference type="Pfam" id="PF00290">
    <property type="entry name" value="Trp_syntA"/>
    <property type="match status" value="1"/>
</dbReference>
<dbReference type="SUPFAM" id="SSF51366">
    <property type="entry name" value="Ribulose-phoshate binding barrel"/>
    <property type="match status" value="1"/>
</dbReference>
<dbReference type="PROSITE" id="PS00167">
    <property type="entry name" value="TRP_SYNTHASE_ALPHA"/>
    <property type="match status" value="1"/>
</dbReference>
<organism>
    <name type="scientific">Roseobacter denitrificans (strain ATCC 33942 / OCh 114)</name>
    <name type="common">Erythrobacter sp. (strain OCh 114)</name>
    <name type="synonym">Roseobacter denitrificans</name>
    <dbReference type="NCBI Taxonomy" id="375451"/>
    <lineage>
        <taxon>Bacteria</taxon>
        <taxon>Pseudomonadati</taxon>
        <taxon>Pseudomonadota</taxon>
        <taxon>Alphaproteobacteria</taxon>
        <taxon>Rhodobacterales</taxon>
        <taxon>Roseobacteraceae</taxon>
        <taxon>Roseobacter</taxon>
    </lineage>
</organism>
<feature type="chain" id="PRO_1000018273" description="Tryptophan synthase alpha chain">
    <location>
        <begin position="1"/>
        <end position="263"/>
    </location>
</feature>
<feature type="active site" description="Proton acceptor" evidence="1">
    <location>
        <position position="49"/>
    </location>
</feature>
<feature type="active site" description="Proton acceptor" evidence="1">
    <location>
        <position position="60"/>
    </location>
</feature>
<gene>
    <name evidence="1" type="primary">trpA</name>
    <name type="ordered locus">RD1_3895</name>
</gene>
<sequence length="263" mass="27539">MTRIDDKFAQLAKDGKKAFVAYVMAGDPNYETSLEVVKGLPAAGVDVIELGLPFTDPMADGPTIQLAGQRALEAGMTLQKTLDLARAFRKDDQTTPIVMMGYYNPIYSRGVDRFLAEAKDAGIDGLIVVDLPPEEDSELCLPAQAAGLNFIRLATPTTDDKRLPRVLQNTSGFVYYVSITGITGAAEAQAVDVGPEVARIKSAAALPVIVGFGVNTPEKSKAIAEVADGVVVGSAIVGKIGAGQSVSDVLAFVKTLADGAHSV</sequence>
<evidence type="ECO:0000255" key="1">
    <source>
        <dbReference type="HAMAP-Rule" id="MF_00131"/>
    </source>
</evidence>
<keyword id="KW-0028">Amino-acid biosynthesis</keyword>
<keyword id="KW-0057">Aromatic amino acid biosynthesis</keyword>
<keyword id="KW-0456">Lyase</keyword>
<keyword id="KW-1185">Reference proteome</keyword>
<keyword id="KW-0822">Tryptophan biosynthesis</keyword>
<proteinExistence type="inferred from homology"/>
<name>TRPA_ROSDO</name>
<comment type="function">
    <text evidence="1">The alpha subunit is responsible for the aldol cleavage of indoleglycerol phosphate to indole and glyceraldehyde 3-phosphate.</text>
</comment>
<comment type="catalytic activity">
    <reaction evidence="1">
        <text>(1S,2R)-1-C-(indol-3-yl)glycerol 3-phosphate + L-serine = D-glyceraldehyde 3-phosphate + L-tryptophan + H2O</text>
        <dbReference type="Rhea" id="RHEA:10532"/>
        <dbReference type="ChEBI" id="CHEBI:15377"/>
        <dbReference type="ChEBI" id="CHEBI:33384"/>
        <dbReference type="ChEBI" id="CHEBI:57912"/>
        <dbReference type="ChEBI" id="CHEBI:58866"/>
        <dbReference type="ChEBI" id="CHEBI:59776"/>
        <dbReference type="EC" id="4.2.1.20"/>
    </reaction>
</comment>
<comment type="pathway">
    <text evidence="1">Amino-acid biosynthesis; L-tryptophan biosynthesis; L-tryptophan from chorismate: step 5/5.</text>
</comment>
<comment type="subunit">
    <text evidence="1">Tetramer of two alpha and two beta chains.</text>
</comment>
<comment type="similarity">
    <text evidence="1">Belongs to the TrpA family.</text>
</comment>
<protein>
    <recommendedName>
        <fullName evidence="1">Tryptophan synthase alpha chain</fullName>
        <ecNumber evidence="1">4.2.1.20</ecNumber>
    </recommendedName>
</protein>